<feature type="chain" id="PRO_1000115190" description="Homoserine O-succinyltransferase">
    <location>
        <begin position="1"/>
        <end position="309"/>
    </location>
</feature>
<feature type="active site" description="Acyl-thioester intermediate" evidence="1">
    <location>
        <position position="142"/>
    </location>
</feature>
<feature type="active site" description="Proton acceptor" evidence="1">
    <location>
        <position position="235"/>
    </location>
</feature>
<feature type="active site" evidence="1">
    <location>
        <position position="237"/>
    </location>
</feature>
<feature type="binding site" evidence="1">
    <location>
        <position position="163"/>
    </location>
    <ligand>
        <name>substrate</name>
    </ligand>
</feature>
<feature type="binding site" evidence="1">
    <location>
        <position position="192"/>
    </location>
    <ligand>
        <name>substrate</name>
    </ligand>
</feature>
<feature type="binding site" evidence="1">
    <location>
        <position position="249"/>
    </location>
    <ligand>
        <name>substrate</name>
    </ligand>
</feature>
<feature type="site" description="Important for acyl-CoA specificity" evidence="1">
    <location>
        <position position="111"/>
    </location>
</feature>
<feature type="site" description="Important for substrate specificity" evidence="1">
    <location>
        <position position="192"/>
    </location>
</feature>
<gene>
    <name evidence="1" type="primary">metAS</name>
    <name type="ordered locus">SG4042</name>
</gene>
<protein>
    <recommendedName>
        <fullName evidence="1">Homoserine O-succinyltransferase</fullName>
        <shortName evidence="1">HST</shortName>
        <ecNumber evidence="1">2.3.1.46</ecNumber>
    </recommendedName>
    <alternativeName>
        <fullName evidence="1">Homoserine transsuccinylase</fullName>
        <shortName evidence="1">HTS</shortName>
    </alternativeName>
</protein>
<comment type="function">
    <text evidence="1">Transfers a succinyl group from succinyl-CoA to L-homoserine, forming succinyl-L-homoserine.</text>
</comment>
<comment type="catalytic activity">
    <reaction evidence="1">
        <text>L-homoserine + succinyl-CoA = O-succinyl-L-homoserine + CoA</text>
        <dbReference type="Rhea" id="RHEA:22008"/>
        <dbReference type="ChEBI" id="CHEBI:57287"/>
        <dbReference type="ChEBI" id="CHEBI:57292"/>
        <dbReference type="ChEBI" id="CHEBI:57476"/>
        <dbReference type="ChEBI" id="CHEBI:57661"/>
        <dbReference type="EC" id="2.3.1.46"/>
    </reaction>
</comment>
<comment type="pathway">
    <text evidence="1">Amino-acid biosynthesis; L-methionine biosynthesis via de novo pathway; O-succinyl-L-homoserine from L-homoserine: step 1/1.</text>
</comment>
<comment type="subunit">
    <text evidence="1">Homodimer.</text>
</comment>
<comment type="subcellular location">
    <subcellularLocation>
        <location evidence="1">Cytoplasm</location>
    </subcellularLocation>
</comment>
<comment type="similarity">
    <text evidence="1">Belongs to the MetA family.</text>
</comment>
<reference key="1">
    <citation type="journal article" date="2008" name="Genome Res.">
        <title>Comparative genome analysis of Salmonella enteritidis PT4 and Salmonella gallinarum 287/91 provides insights into evolutionary and host adaptation pathways.</title>
        <authorList>
            <person name="Thomson N.R."/>
            <person name="Clayton D.J."/>
            <person name="Windhorst D."/>
            <person name="Vernikos G."/>
            <person name="Davidson S."/>
            <person name="Churcher C."/>
            <person name="Quail M.A."/>
            <person name="Stevens M."/>
            <person name="Jones M.A."/>
            <person name="Watson M."/>
            <person name="Barron A."/>
            <person name="Layton A."/>
            <person name="Pickard D."/>
            <person name="Kingsley R.A."/>
            <person name="Bignell A."/>
            <person name="Clark L."/>
            <person name="Harris B."/>
            <person name="Ormond D."/>
            <person name="Abdellah Z."/>
            <person name="Brooks K."/>
            <person name="Cherevach I."/>
            <person name="Chillingworth T."/>
            <person name="Woodward J."/>
            <person name="Norberczak H."/>
            <person name="Lord A."/>
            <person name="Arrowsmith C."/>
            <person name="Jagels K."/>
            <person name="Moule S."/>
            <person name="Mungall K."/>
            <person name="Saunders M."/>
            <person name="Whitehead S."/>
            <person name="Chabalgoity J.A."/>
            <person name="Maskell D."/>
            <person name="Humphreys T."/>
            <person name="Roberts M."/>
            <person name="Barrow P.A."/>
            <person name="Dougan G."/>
            <person name="Parkhill J."/>
        </authorList>
    </citation>
    <scope>NUCLEOTIDE SEQUENCE [LARGE SCALE GENOMIC DNA]</scope>
    <source>
        <strain>287/91 / NCTC 13346</strain>
    </source>
</reference>
<dbReference type="EC" id="2.3.1.46" evidence="1"/>
<dbReference type="EMBL" id="AM933173">
    <property type="protein sequence ID" value="CAR39812.1"/>
    <property type="molecule type" value="Genomic_DNA"/>
</dbReference>
<dbReference type="RefSeq" id="WP_001122757.1">
    <property type="nucleotide sequence ID" value="NC_011274.1"/>
</dbReference>
<dbReference type="SMR" id="B5R7Q1"/>
<dbReference type="KEGG" id="seg:SG4042"/>
<dbReference type="HOGENOM" id="CLU_057851_0_1_6"/>
<dbReference type="UniPathway" id="UPA00051">
    <property type="reaction ID" value="UER00075"/>
</dbReference>
<dbReference type="Proteomes" id="UP000008321">
    <property type="component" value="Chromosome"/>
</dbReference>
<dbReference type="GO" id="GO:0005737">
    <property type="term" value="C:cytoplasm"/>
    <property type="evidence" value="ECO:0007669"/>
    <property type="project" value="UniProtKB-SubCell"/>
</dbReference>
<dbReference type="GO" id="GO:0004414">
    <property type="term" value="F:homoserine O-acetyltransferase activity"/>
    <property type="evidence" value="ECO:0007669"/>
    <property type="project" value="UniProtKB-UniRule"/>
</dbReference>
<dbReference type="GO" id="GO:0008899">
    <property type="term" value="F:homoserine O-succinyltransferase activity"/>
    <property type="evidence" value="ECO:0007669"/>
    <property type="project" value="UniProtKB-EC"/>
</dbReference>
<dbReference type="GO" id="GO:0019281">
    <property type="term" value="P:L-methionine biosynthetic process from homoserine via O-succinyl-L-homoserine and cystathionine"/>
    <property type="evidence" value="ECO:0007669"/>
    <property type="project" value="InterPro"/>
</dbReference>
<dbReference type="CDD" id="cd03131">
    <property type="entry name" value="GATase1_HTS"/>
    <property type="match status" value="1"/>
</dbReference>
<dbReference type="FunFam" id="3.40.50.880:FF:000004">
    <property type="entry name" value="Homoserine O-succinyltransferase"/>
    <property type="match status" value="1"/>
</dbReference>
<dbReference type="Gene3D" id="3.40.50.880">
    <property type="match status" value="1"/>
</dbReference>
<dbReference type="HAMAP" id="MF_00295">
    <property type="entry name" value="MetA_acyltransf"/>
    <property type="match status" value="1"/>
</dbReference>
<dbReference type="InterPro" id="IPR029062">
    <property type="entry name" value="Class_I_gatase-like"/>
</dbReference>
<dbReference type="InterPro" id="IPR005697">
    <property type="entry name" value="HST_MetA"/>
</dbReference>
<dbReference type="InterPro" id="IPR033752">
    <property type="entry name" value="MetA_family"/>
</dbReference>
<dbReference type="NCBIfam" id="TIGR01001">
    <property type="entry name" value="metA"/>
    <property type="match status" value="1"/>
</dbReference>
<dbReference type="PANTHER" id="PTHR20919">
    <property type="entry name" value="HOMOSERINE O-SUCCINYLTRANSFERASE"/>
    <property type="match status" value="1"/>
</dbReference>
<dbReference type="PANTHER" id="PTHR20919:SF0">
    <property type="entry name" value="HOMOSERINE O-SUCCINYLTRANSFERASE"/>
    <property type="match status" value="1"/>
</dbReference>
<dbReference type="Pfam" id="PF04204">
    <property type="entry name" value="HTS"/>
    <property type="match status" value="1"/>
</dbReference>
<dbReference type="PIRSF" id="PIRSF000450">
    <property type="entry name" value="H_ser_succinyltr"/>
    <property type="match status" value="1"/>
</dbReference>
<dbReference type="SUPFAM" id="SSF52317">
    <property type="entry name" value="Class I glutamine amidotransferase-like"/>
    <property type="match status" value="1"/>
</dbReference>
<evidence type="ECO:0000255" key="1">
    <source>
        <dbReference type="HAMAP-Rule" id="MF_00295"/>
    </source>
</evidence>
<organism>
    <name type="scientific">Salmonella gallinarum (strain 287/91 / NCTC 13346)</name>
    <dbReference type="NCBI Taxonomy" id="550538"/>
    <lineage>
        <taxon>Bacteria</taxon>
        <taxon>Pseudomonadati</taxon>
        <taxon>Pseudomonadota</taxon>
        <taxon>Gammaproteobacteria</taxon>
        <taxon>Enterobacterales</taxon>
        <taxon>Enterobacteriaceae</taxon>
        <taxon>Salmonella</taxon>
    </lineage>
</organism>
<accession>B5R7Q1</accession>
<name>METAS_SALG2</name>
<proteinExistence type="inferred from homology"/>
<keyword id="KW-0012">Acyltransferase</keyword>
<keyword id="KW-0028">Amino-acid biosynthesis</keyword>
<keyword id="KW-0963">Cytoplasm</keyword>
<keyword id="KW-0486">Methionine biosynthesis</keyword>
<keyword id="KW-0808">Transferase</keyword>
<sequence length="309" mass="35680">MPIRVLDELPAVNFLREENVFVMTTSRAPGQEIRPLKVLILNLMPKKIETENQFLRLLSNSPLQVDIQLLRIDARESRNTPAEHLNNFYCNFDDICDQNFDGLIVTGAPLGLVEFNDVAYWPQIRQVLEWAKDHVTSTLFVCWAVQAALNILYGIPKQTRTDKLSGVYEHHILHPHALLTRGFDDSFLAPHSRYADFPAALIRDYTDLEILAETEEGDAYLFASKDKRIAFVTGHPEYDAHTLAGEYFRDVEAGLNPEVPYNYFPKNDPQNIPRATWRSHGNLLFTNWLNYYVYQITPYDLRHMNPTLD</sequence>